<evidence type="ECO:0000255" key="1">
    <source>
        <dbReference type="HAMAP-Rule" id="MF_00271"/>
    </source>
</evidence>
<proteinExistence type="inferred from homology"/>
<accession>Q8U4A4</accession>
<sequence>MPEILKVKPTRMELLKLKRRVKLAERGHKLLKEKQDALIMEFFTIYDEALSMRRELIKKIGEAFEALRLAQVEVGSVRLKEIAIGVNPNKEIEVRSRNIMGVRVPLIEVPELKRKPSERGYAFISTSSAVDVAAEKFEEVLELAIRLAEVEESLKRLGKEIEKTKRRVNALEYIIIPRMKNTIKFIEQHLDEMERENFFRLKRIKALLEARESM</sequence>
<organism>
    <name type="scientific">Pyrococcus furiosus (strain ATCC 43587 / DSM 3638 / JCM 8422 / Vc1)</name>
    <dbReference type="NCBI Taxonomy" id="186497"/>
    <lineage>
        <taxon>Archaea</taxon>
        <taxon>Methanobacteriati</taxon>
        <taxon>Methanobacteriota</taxon>
        <taxon>Thermococci</taxon>
        <taxon>Thermococcales</taxon>
        <taxon>Thermococcaceae</taxon>
        <taxon>Pyrococcus</taxon>
    </lineage>
</organism>
<dbReference type="EMBL" id="AE009950">
    <property type="protein sequence ID" value="AAL80308.1"/>
    <property type="molecule type" value="Genomic_DNA"/>
</dbReference>
<dbReference type="RefSeq" id="WP_011011297.1">
    <property type="nucleotide sequence ID" value="NZ_CP023154.1"/>
</dbReference>
<dbReference type="SMR" id="Q8U4A4"/>
<dbReference type="STRING" id="186497.PF0184"/>
<dbReference type="PaxDb" id="186497-PF0184"/>
<dbReference type="KEGG" id="pfu:PF0184"/>
<dbReference type="PATRIC" id="fig|186497.12.peg.191"/>
<dbReference type="eggNOG" id="arCOG04101">
    <property type="taxonomic scope" value="Archaea"/>
</dbReference>
<dbReference type="HOGENOM" id="CLU_069688_2_1_2"/>
<dbReference type="OrthoDB" id="117390at2157"/>
<dbReference type="PhylomeDB" id="Q8U4A4"/>
<dbReference type="Proteomes" id="UP000001013">
    <property type="component" value="Chromosome"/>
</dbReference>
<dbReference type="GO" id="GO:0005886">
    <property type="term" value="C:plasma membrane"/>
    <property type="evidence" value="ECO:0007669"/>
    <property type="project" value="UniProtKB-SubCell"/>
</dbReference>
<dbReference type="GO" id="GO:0005524">
    <property type="term" value="F:ATP binding"/>
    <property type="evidence" value="ECO:0007669"/>
    <property type="project" value="UniProtKB-UniRule"/>
</dbReference>
<dbReference type="GO" id="GO:0046933">
    <property type="term" value="F:proton-transporting ATP synthase activity, rotational mechanism"/>
    <property type="evidence" value="ECO:0007669"/>
    <property type="project" value="UniProtKB-UniRule"/>
</dbReference>
<dbReference type="GO" id="GO:0046961">
    <property type="term" value="F:proton-transporting ATPase activity, rotational mechanism"/>
    <property type="evidence" value="ECO:0007669"/>
    <property type="project" value="InterPro"/>
</dbReference>
<dbReference type="GO" id="GO:0042777">
    <property type="term" value="P:proton motive force-driven plasma membrane ATP synthesis"/>
    <property type="evidence" value="ECO:0007669"/>
    <property type="project" value="UniProtKB-UniRule"/>
</dbReference>
<dbReference type="FunFam" id="1.10.287.3240:FF:000007">
    <property type="entry name" value="V-type ATP synthase subunit D"/>
    <property type="match status" value="1"/>
</dbReference>
<dbReference type="Gene3D" id="1.10.287.3240">
    <property type="match status" value="1"/>
</dbReference>
<dbReference type="HAMAP" id="MF_00271">
    <property type="entry name" value="ATP_synth_D_arch"/>
    <property type="match status" value="1"/>
</dbReference>
<dbReference type="InterPro" id="IPR002699">
    <property type="entry name" value="V_ATPase_D"/>
</dbReference>
<dbReference type="NCBIfam" id="NF001545">
    <property type="entry name" value="PRK00373.1-4"/>
    <property type="match status" value="1"/>
</dbReference>
<dbReference type="NCBIfam" id="TIGR00309">
    <property type="entry name" value="V_ATPase_subD"/>
    <property type="match status" value="1"/>
</dbReference>
<dbReference type="PANTHER" id="PTHR11671">
    <property type="entry name" value="V-TYPE ATP SYNTHASE SUBUNIT D"/>
    <property type="match status" value="1"/>
</dbReference>
<dbReference type="Pfam" id="PF01813">
    <property type="entry name" value="ATP-synt_D"/>
    <property type="match status" value="1"/>
</dbReference>
<name>AATD_PYRFU</name>
<reference key="1">
    <citation type="journal article" date="1999" name="Genetics">
        <title>Divergence of the hyperthermophilic archaea Pyrococcus furiosus and P. horikoshii inferred from complete genomic sequences.</title>
        <authorList>
            <person name="Maeder D.L."/>
            <person name="Weiss R.B."/>
            <person name="Dunn D.M."/>
            <person name="Cherry J.L."/>
            <person name="Gonzalez J.M."/>
            <person name="DiRuggiero J."/>
            <person name="Robb F.T."/>
        </authorList>
    </citation>
    <scope>NUCLEOTIDE SEQUENCE [LARGE SCALE GENOMIC DNA]</scope>
    <source>
        <strain>ATCC 43587 / DSM 3638 / JCM 8422 / Vc1</strain>
    </source>
</reference>
<comment type="function">
    <text evidence="1">Component of the A-type ATP synthase that produces ATP from ADP in the presence of a proton gradient across the membrane.</text>
</comment>
<comment type="subunit">
    <text evidence="1">Has multiple subunits with at least A(3), B(3), C, D, E, F, H, I and proteolipid K(x).</text>
</comment>
<comment type="subcellular location">
    <subcellularLocation>
        <location evidence="1">Cell membrane</location>
        <topology evidence="1">Peripheral membrane protein</topology>
    </subcellularLocation>
</comment>
<comment type="similarity">
    <text evidence="1">Belongs to the V-ATPase D subunit family.</text>
</comment>
<protein>
    <recommendedName>
        <fullName evidence="1">A-type ATP synthase subunit D</fullName>
    </recommendedName>
</protein>
<gene>
    <name evidence="1" type="primary">atpD</name>
    <name type="ordered locus">PF0184</name>
</gene>
<feature type="chain" id="PRO_0000144255" description="A-type ATP synthase subunit D">
    <location>
        <begin position="1"/>
        <end position="214"/>
    </location>
</feature>
<keyword id="KW-0066">ATP synthesis</keyword>
<keyword id="KW-1003">Cell membrane</keyword>
<keyword id="KW-0375">Hydrogen ion transport</keyword>
<keyword id="KW-0406">Ion transport</keyword>
<keyword id="KW-0472">Membrane</keyword>
<keyword id="KW-1185">Reference proteome</keyword>
<keyword id="KW-0813">Transport</keyword>